<proteinExistence type="inferred from homology"/>
<reference key="1">
    <citation type="journal article" date="2008" name="PLoS Genet.">
        <title>Complete genome sequence of the complex carbohydrate-degrading marine bacterium, Saccharophagus degradans strain 2-40 T.</title>
        <authorList>
            <person name="Weiner R.M."/>
            <person name="Taylor L.E. II"/>
            <person name="Henrissat B."/>
            <person name="Hauser L."/>
            <person name="Land M."/>
            <person name="Coutinho P.M."/>
            <person name="Rancurel C."/>
            <person name="Saunders E.H."/>
            <person name="Longmire A.G."/>
            <person name="Zhang H."/>
            <person name="Bayer E.A."/>
            <person name="Gilbert H.J."/>
            <person name="Larimer F."/>
            <person name="Zhulin I.B."/>
            <person name="Ekborg N.A."/>
            <person name="Lamed R."/>
            <person name="Richardson P.M."/>
            <person name="Borovok I."/>
            <person name="Hutcheson S."/>
        </authorList>
    </citation>
    <scope>NUCLEOTIDE SEQUENCE [LARGE SCALE GENOMIC DNA]</scope>
    <source>
        <strain>2-40 / ATCC 43961 / DSM 17024</strain>
    </source>
</reference>
<organism>
    <name type="scientific">Saccharophagus degradans (strain 2-40 / ATCC 43961 / DSM 17024)</name>
    <dbReference type="NCBI Taxonomy" id="203122"/>
    <lineage>
        <taxon>Bacteria</taxon>
        <taxon>Pseudomonadati</taxon>
        <taxon>Pseudomonadota</taxon>
        <taxon>Gammaproteobacteria</taxon>
        <taxon>Cellvibrionales</taxon>
        <taxon>Cellvibrionaceae</taxon>
        <taxon>Saccharophagus</taxon>
    </lineage>
</organism>
<gene>
    <name evidence="1" type="primary">rlmF</name>
    <name type="ordered locus">Sde_0304</name>
</gene>
<keyword id="KW-0963">Cytoplasm</keyword>
<keyword id="KW-0489">Methyltransferase</keyword>
<keyword id="KW-1185">Reference proteome</keyword>
<keyword id="KW-0698">rRNA processing</keyword>
<keyword id="KW-0949">S-adenosyl-L-methionine</keyword>
<keyword id="KW-0808">Transferase</keyword>
<feature type="chain" id="PRO_0000349944" description="Ribosomal RNA large subunit methyltransferase F">
    <location>
        <begin position="1"/>
        <end position="320"/>
    </location>
</feature>
<feature type="region of interest" description="Disordered" evidence="2">
    <location>
        <begin position="1"/>
        <end position="20"/>
    </location>
</feature>
<comment type="function">
    <text evidence="1">Specifically methylates the adenine in position 1618 of 23S rRNA.</text>
</comment>
<comment type="catalytic activity">
    <reaction evidence="1">
        <text>adenosine(1618) in 23S rRNA + S-adenosyl-L-methionine = N(6)-methyladenosine(1618) in 23S rRNA + S-adenosyl-L-homocysteine + H(+)</text>
        <dbReference type="Rhea" id="RHEA:16497"/>
        <dbReference type="Rhea" id="RHEA-COMP:10229"/>
        <dbReference type="Rhea" id="RHEA-COMP:10231"/>
        <dbReference type="ChEBI" id="CHEBI:15378"/>
        <dbReference type="ChEBI" id="CHEBI:57856"/>
        <dbReference type="ChEBI" id="CHEBI:59789"/>
        <dbReference type="ChEBI" id="CHEBI:74411"/>
        <dbReference type="ChEBI" id="CHEBI:74449"/>
        <dbReference type="EC" id="2.1.1.181"/>
    </reaction>
</comment>
<comment type="subcellular location">
    <subcellularLocation>
        <location evidence="1">Cytoplasm</location>
    </subcellularLocation>
</comment>
<comment type="similarity">
    <text evidence="1">Belongs to the methyltransferase superfamily. METTL16/RlmF family.</text>
</comment>
<accession>Q21P11</accession>
<sequence>MHKSANSKTRKQSKGLHPRNIHRNGYDFDALKACHPPLVQYIKCNPVGAATIDFANSAAVKALNTALLQHHYKIESWSIPDGALCPPIPGRIDYIHYIAELLGCPLPSGKINTANTCTNNAVKMLDVGTGANGIYTLLACAVYGWRCVGSDINSESLANVKAVLANNPTLNANISLRLQPNKDAFFSQIIQTDDYFDVSVCNPPFHASQEEASKGTNRKLHNLARSRNKAHTAKQPSLNFGGQHAELWCNGGERLFLKKMIKESQAFAQQVGWFTSLVSKSENVQPALKLIRKLGATEVREIEMMQGNKKTRVIAWRFKP</sequence>
<protein>
    <recommendedName>
        <fullName evidence="1">Ribosomal RNA large subunit methyltransferase F</fullName>
        <ecNumber evidence="1">2.1.1.181</ecNumber>
    </recommendedName>
    <alternativeName>
        <fullName evidence="1">23S rRNA mA1618 methyltransferase</fullName>
    </alternativeName>
    <alternativeName>
        <fullName evidence="1">rRNA adenine N-6-methyltransferase</fullName>
    </alternativeName>
</protein>
<name>RLMF_SACD2</name>
<dbReference type="EC" id="2.1.1.181" evidence="1"/>
<dbReference type="EMBL" id="CP000282">
    <property type="protein sequence ID" value="ABD79568.1"/>
    <property type="molecule type" value="Genomic_DNA"/>
</dbReference>
<dbReference type="RefSeq" id="WP_011466792.1">
    <property type="nucleotide sequence ID" value="NC_007912.1"/>
</dbReference>
<dbReference type="SMR" id="Q21P11"/>
<dbReference type="STRING" id="203122.Sde_0304"/>
<dbReference type="GeneID" id="98612006"/>
<dbReference type="KEGG" id="sde:Sde_0304"/>
<dbReference type="eggNOG" id="COG3129">
    <property type="taxonomic scope" value="Bacteria"/>
</dbReference>
<dbReference type="HOGENOM" id="CLU_027534_3_0_6"/>
<dbReference type="OrthoDB" id="1115728at2"/>
<dbReference type="Proteomes" id="UP000001947">
    <property type="component" value="Chromosome"/>
</dbReference>
<dbReference type="GO" id="GO:0005737">
    <property type="term" value="C:cytoplasm"/>
    <property type="evidence" value="ECO:0007669"/>
    <property type="project" value="UniProtKB-SubCell"/>
</dbReference>
<dbReference type="GO" id="GO:0052907">
    <property type="term" value="F:23S rRNA (adenine(1618)-N(6))-methyltransferase activity"/>
    <property type="evidence" value="ECO:0007669"/>
    <property type="project" value="UniProtKB-EC"/>
</dbReference>
<dbReference type="GO" id="GO:0070475">
    <property type="term" value="P:rRNA base methylation"/>
    <property type="evidence" value="ECO:0007669"/>
    <property type="project" value="TreeGrafter"/>
</dbReference>
<dbReference type="CDD" id="cd02440">
    <property type="entry name" value="AdoMet_MTases"/>
    <property type="match status" value="1"/>
</dbReference>
<dbReference type="Gene3D" id="3.40.50.150">
    <property type="entry name" value="Vaccinia Virus protein VP39"/>
    <property type="match status" value="1"/>
</dbReference>
<dbReference type="HAMAP" id="MF_01848">
    <property type="entry name" value="23SrRNA_methyltr_F"/>
    <property type="match status" value="1"/>
</dbReference>
<dbReference type="InterPro" id="IPR010286">
    <property type="entry name" value="METTL16/RlmF"/>
</dbReference>
<dbReference type="InterPro" id="IPR016909">
    <property type="entry name" value="rRNA_lsu_MeTfrase_F"/>
</dbReference>
<dbReference type="InterPro" id="IPR029063">
    <property type="entry name" value="SAM-dependent_MTases_sf"/>
</dbReference>
<dbReference type="NCBIfam" id="NF008725">
    <property type="entry name" value="PRK11727.1"/>
    <property type="match status" value="1"/>
</dbReference>
<dbReference type="PANTHER" id="PTHR13393:SF0">
    <property type="entry name" value="RNA N6-ADENOSINE-METHYLTRANSFERASE METTL16"/>
    <property type="match status" value="1"/>
</dbReference>
<dbReference type="PANTHER" id="PTHR13393">
    <property type="entry name" value="SAM-DEPENDENT METHYLTRANSFERASE"/>
    <property type="match status" value="1"/>
</dbReference>
<dbReference type="Pfam" id="PF05971">
    <property type="entry name" value="Methyltransf_10"/>
    <property type="match status" value="1"/>
</dbReference>
<dbReference type="PIRSF" id="PIRSF029038">
    <property type="entry name" value="Mtase_YbiN_prd"/>
    <property type="match status" value="1"/>
</dbReference>
<dbReference type="SUPFAM" id="SSF53335">
    <property type="entry name" value="S-adenosyl-L-methionine-dependent methyltransferases"/>
    <property type="match status" value="1"/>
</dbReference>
<evidence type="ECO:0000255" key="1">
    <source>
        <dbReference type="HAMAP-Rule" id="MF_01848"/>
    </source>
</evidence>
<evidence type="ECO:0000256" key="2">
    <source>
        <dbReference type="SAM" id="MobiDB-lite"/>
    </source>
</evidence>